<accession>Q3URY2</accession>
<accession>Q3TUK3</accession>
<accession>Q5RJG4</accession>
<keyword id="KW-0025">Alternative splicing</keyword>
<keyword id="KW-0131">Cell cycle</keyword>
<keyword id="KW-0175">Coiled coil</keyword>
<keyword id="KW-0235">DNA replication</keyword>
<keyword id="KW-0539">Nucleus</keyword>
<keyword id="KW-0597">Phosphoprotein</keyword>
<keyword id="KW-1185">Reference proteome</keyword>
<comment type="function">
    <text evidence="1">Regulator of DNA replication. Promotes initiation of chromosomal DNA replication by mediating TOPBP1- and CDK2-dependent recruitment of CDC45L onto replication origins (By similarity).</text>
</comment>
<comment type="subcellular location">
    <subcellularLocation>
        <location evidence="1">Nucleus</location>
    </subcellularLocation>
    <text evidence="1">Associates with chromatin during pre-replication complex (pre-RC) formation.</text>
</comment>
<comment type="alternative products">
    <event type="alternative splicing"/>
    <isoform>
        <id>Q3URY2-1</id>
        <name>1</name>
        <sequence type="displayed"/>
    </isoform>
    <isoform>
        <id>Q3URY2-2</id>
        <name>2</name>
        <sequence type="described" ref="VSP_034993"/>
    </isoform>
    <isoform>
        <id>Q3URY2-3</id>
        <name>3</name>
        <sequence type="described" ref="VSP_034992"/>
    </isoform>
</comment>
<comment type="PTM">
    <text evidence="1">Highly phosphorylated by CDK2; stimulates initiation of DNA replication.</text>
</comment>
<comment type="similarity">
    <text evidence="6">Belongs to the GEMC1 family.</text>
</comment>
<proteinExistence type="evidence at transcript level"/>
<dbReference type="EMBL" id="AK141059">
    <property type="protein sequence ID" value="BAE24555.1"/>
    <property type="molecule type" value="mRNA"/>
</dbReference>
<dbReference type="EMBL" id="AK160719">
    <property type="protein sequence ID" value="BAE35968.1"/>
    <property type="molecule type" value="mRNA"/>
</dbReference>
<dbReference type="EMBL" id="BC086669">
    <property type="protein sequence ID" value="AAH86669.1"/>
    <property type="molecule type" value="mRNA"/>
</dbReference>
<dbReference type="CCDS" id="CCDS37304.1">
    <molecule id="Q3URY2-2"/>
</dbReference>
<dbReference type="CCDS" id="CCDS88906.1">
    <molecule id="Q3URY2-1"/>
</dbReference>
<dbReference type="CCDS" id="CCDS88907.1">
    <molecule id="Q3URY2-3"/>
</dbReference>
<dbReference type="RefSeq" id="NP_001013783.1">
    <molecule id="Q3URY2-2"/>
    <property type="nucleotide sequence ID" value="NM_001013761.2"/>
</dbReference>
<dbReference type="RefSeq" id="NP_001272845.1">
    <molecule id="Q3URY2-1"/>
    <property type="nucleotide sequence ID" value="NM_001285916.1"/>
</dbReference>
<dbReference type="RefSeq" id="NP_001272847.1">
    <molecule id="Q3URY2-3"/>
    <property type="nucleotide sequence ID" value="NM_001285918.1"/>
</dbReference>
<dbReference type="SMR" id="Q3URY2"/>
<dbReference type="FunCoup" id="Q3URY2">
    <property type="interactions" value="1297"/>
</dbReference>
<dbReference type="STRING" id="10090.ENSMUSP00000087269"/>
<dbReference type="iPTMnet" id="Q3URY2"/>
<dbReference type="PhosphoSitePlus" id="Q3URY2"/>
<dbReference type="PaxDb" id="10090-ENSMUSP00000087269"/>
<dbReference type="ProteomicsDB" id="266790">
    <molecule id="Q3URY2-1"/>
</dbReference>
<dbReference type="ProteomicsDB" id="266791">
    <molecule id="Q3URY2-2"/>
</dbReference>
<dbReference type="ProteomicsDB" id="266792">
    <molecule id="Q3URY2-3"/>
</dbReference>
<dbReference type="Antibodypedia" id="49140">
    <property type="antibodies" value="59 antibodies from 18 providers"/>
</dbReference>
<dbReference type="Ensembl" id="ENSMUST00000089832.6">
    <molecule id="Q3URY2-2"/>
    <property type="protein sequence ID" value="ENSMUSP00000087269.5"/>
    <property type="gene ID" value="ENSMUSG00000068428.8"/>
</dbReference>
<dbReference type="Ensembl" id="ENSMUST00000231299.2">
    <molecule id="Q3URY2-3"/>
    <property type="protein sequence ID" value="ENSMUSP00000156264.2"/>
    <property type="gene ID" value="ENSMUSG00000068428.8"/>
</dbReference>
<dbReference type="Ensembl" id="ENSMUST00000231969.2">
    <molecule id="Q3URY2-1"/>
    <property type="protein sequence ID" value="ENSMUSP00000156070.2"/>
    <property type="gene ID" value="ENSMUSG00000068428.8"/>
</dbReference>
<dbReference type="GeneID" id="239789"/>
<dbReference type="KEGG" id="mmu:239789"/>
<dbReference type="UCSC" id="uc007yvi.1">
    <molecule id="Q3URY2-1"/>
    <property type="organism name" value="mouse"/>
</dbReference>
<dbReference type="UCSC" id="uc007yvj.2">
    <molecule id="Q3URY2-2"/>
    <property type="organism name" value="mouse"/>
</dbReference>
<dbReference type="UCSC" id="uc007yvk.2">
    <molecule id="Q3URY2-3"/>
    <property type="organism name" value="mouse"/>
</dbReference>
<dbReference type="AGR" id="MGI:2685452"/>
<dbReference type="CTD" id="647309"/>
<dbReference type="MGI" id="MGI:2685452">
    <property type="gene designation" value="Gmnc"/>
</dbReference>
<dbReference type="VEuPathDB" id="HostDB:ENSMUSG00000068428"/>
<dbReference type="eggNOG" id="ENOG502RE7T">
    <property type="taxonomic scope" value="Eukaryota"/>
</dbReference>
<dbReference type="GeneTree" id="ENSGT00940000153270"/>
<dbReference type="HOGENOM" id="CLU_071972_0_0_1"/>
<dbReference type="InParanoid" id="Q3URY2"/>
<dbReference type="OMA" id="DHHSYWS"/>
<dbReference type="OrthoDB" id="27951at9989"/>
<dbReference type="PhylomeDB" id="Q3URY2"/>
<dbReference type="TreeFam" id="TF344118"/>
<dbReference type="BioGRID-ORCS" id="239789">
    <property type="hits" value="0 hits in 75 CRISPR screens"/>
</dbReference>
<dbReference type="ChiTaRS" id="Gmnc">
    <property type="organism name" value="mouse"/>
</dbReference>
<dbReference type="PRO" id="PR:Q3URY2"/>
<dbReference type="Proteomes" id="UP000000589">
    <property type="component" value="Chromosome 16"/>
</dbReference>
<dbReference type="RNAct" id="Q3URY2">
    <property type="molecule type" value="protein"/>
</dbReference>
<dbReference type="Bgee" id="ENSMUSG00000068428">
    <property type="expression patterns" value="Expressed in vascular system and 27 other cell types or tissues"/>
</dbReference>
<dbReference type="ExpressionAtlas" id="Q3URY2">
    <property type="expression patterns" value="baseline and differential"/>
</dbReference>
<dbReference type="GO" id="GO:0005576">
    <property type="term" value="C:extracellular region"/>
    <property type="evidence" value="ECO:0007669"/>
    <property type="project" value="GOC"/>
</dbReference>
<dbReference type="GO" id="GO:0005634">
    <property type="term" value="C:nucleus"/>
    <property type="evidence" value="ECO:0000250"/>
    <property type="project" value="UniProtKB"/>
</dbReference>
<dbReference type="GO" id="GO:0003682">
    <property type="term" value="F:chromatin binding"/>
    <property type="evidence" value="ECO:0000250"/>
    <property type="project" value="UniProtKB"/>
</dbReference>
<dbReference type="GO" id="GO:0090660">
    <property type="term" value="P:cerebrospinal fluid circulation"/>
    <property type="evidence" value="ECO:0000315"/>
    <property type="project" value="MGI"/>
</dbReference>
<dbReference type="GO" id="GO:0060271">
    <property type="term" value="P:cilium assembly"/>
    <property type="evidence" value="ECO:0000315"/>
    <property type="project" value="MGI"/>
</dbReference>
<dbReference type="GO" id="GO:0006260">
    <property type="term" value="P:DNA replication"/>
    <property type="evidence" value="ECO:0000315"/>
    <property type="project" value="UniProtKB"/>
</dbReference>
<dbReference type="GO" id="GO:1903251">
    <property type="term" value="P:multi-ciliated epithelial cell differentiation"/>
    <property type="evidence" value="ECO:0000315"/>
    <property type="project" value="MGI"/>
</dbReference>
<dbReference type="GO" id="GO:0035264">
    <property type="term" value="P:multicellular organism growth"/>
    <property type="evidence" value="ECO:0000315"/>
    <property type="project" value="MGI"/>
</dbReference>
<dbReference type="GO" id="GO:0072520">
    <property type="term" value="P:seminiferous tubule development"/>
    <property type="evidence" value="ECO:0000315"/>
    <property type="project" value="MGI"/>
</dbReference>
<dbReference type="GO" id="GO:0007338">
    <property type="term" value="P:single fertilization"/>
    <property type="evidence" value="ECO:0000315"/>
    <property type="project" value="MGI"/>
</dbReference>
<dbReference type="GO" id="GO:0007283">
    <property type="term" value="P:spermatogenesis"/>
    <property type="evidence" value="ECO:0000315"/>
    <property type="project" value="MGI"/>
</dbReference>
<dbReference type="CDD" id="cd22588">
    <property type="entry name" value="GemC1_CC"/>
    <property type="match status" value="1"/>
</dbReference>
<dbReference type="PANTHER" id="PTHR13372">
    <property type="entry name" value="GEMININ"/>
    <property type="match status" value="1"/>
</dbReference>
<dbReference type="PANTHER" id="PTHR13372:SF2">
    <property type="entry name" value="GEMININ COILED-COIL DOMAIN-CONTAINING PROTEIN 1"/>
    <property type="match status" value="1"/>
</dbReference>
<organism>
    <name type="scientific">Mus musculus</name>
    <name type="common">Mouse</name>
    <dbReference type="NCBI Taxonomy" id="10090"/>
    <lineage>
        <taxon>Eukaryota</taxon>
        <taxon>Metazoa</taxon>
        <taxon>Chordata</taxon>
        <taxon>Craniata</taxon>
        <taxon>Vertebrata</taxon>
        <taxon>Euteleostomi</taxon>
        <taxon>Mammalia</taxon>
        <taxon>Eutheria</taxon>
        <taxon>Euarchontoglires</taxon>
        <taxon>Glires</taxon>
        <taxon>Rodentia</taxon>
        <taxon>Myomorpha</taxon>
        <taxon>Muroidea</taxon>
        <taxon>Muridae</taxon>
        <taxon>Murinae</taxon>
        <taxon>Mus</taxon>
        <taxon>Mus</taxon>
    </lineage>
</organism>
<name>GEMC1_MOUSE</name>
<feature type="chain" id="PRO_0000346426" description="Geminin coiled-coil domain-containing protein 1">
    <location>
        <begin position="1"/>
        <end position="333"/>
    </location>
</feature>
<feature type="region of interest" description="Disordered" evidence="3">
    <location>
        <begin position="145"/>
        <end position="165"/>
    </location>
</feature>
<feature type="coiled-coil region" evidence="2">
    <location>
        <begin position="83"/>
        <end position="118"/>
    </location>
</feature>
<feature type="compositionally biased region" description="Basic residues" evidence="3">
    <location>
        <begin position="145"/>
        <end position="154"/>
    </location>
</feature>
<feature type="splice variant" id="VSP_034992" description="In isoform 3." evidence="5">
    <original>MNSILPCQDQYFVGGQSYNCPYSTTTSESGVDVSKETWVSFWAAGLLDNTELQQAPQVL</original>
    <variation>MRITDWATRGYGRCCVP</variation>
    <location>
        <begin position="1"/>
        <end position="59"/>
    </location>
</feature>
<feature type="splice variant" id="VSP_034993" description="In isoform 2." evidence="4">
    <original>M</original>
    <variation>MEDAVFQ</variation>
    <location>
        <position position="1"/>
    </location>
</feature>
<sequence length="333" mass="37758">MNSILPCQDQYFVGGQSYNCPYSTTTSESGVDVSKETWVSFWAAGLLDNTELQQAPQVLESPSELSFPVLDSCSWEEAQLSSQLYRNKQLQDTLLQKEEELARLHEENNHLRQYLNSTLVKRLEEKAKKLLSSDEFSKVFGKLRKEKRKPKEHRHSPAEIPQFKTAKRNLSTEFSNCEEQPGPHVDPWVLQTLGLKDLNTIDDTLPANYSATTSHPRAVPSISSLFVHDANGYANVPRDLHLDYVGQGTHGSHTTSIHQEDCHSFPRLSNPPVRVQTLPYHTADVSPNKTEMAFSTSLSPHCNVKTHSFHQGQAFVRRDEEGGWKFTWVPKQT</sequence>
<reference key="1">
    <citation type="journal article" date="2005" name="Science">
        <title>The transcriptional landscape of the mammalian genome.</title>
        <authorList>
            <person name="Carninci P."/>
            <person name="Kasukawa T."/>
            <person name="Katayama S."/>
            <person name="Gough J."/>
            <person name="Frith M.C."/>
            <person name="Maeda N."/>
            <person name="Oyama R."/>
            <person name="Ravasi T."/>
            <person name="Lenhard B."/>
            <person name="Wells C."/>
            <person name="Kodzius R."/>
            <person name="Shimokawa K."/>
            <person name="Bajic V.B."/>
            <person name="Brenner S.E."/>
            <person name="Batalov S."/>
            <person name="Forrest A.R."/>
            <person name="Zavolan M."/>
            <person name="Davis M.J."/>
            <person name="Wilming L.G."/>
            <person name="Aidinis V."/>
            <person name="Allen J.E."/>
            <person name="Ambesi-Impiombato A."/>
            <person name="Apweiler R."/>
            <person name="Aturaliya R.N."/>
            <person name="Bailey T.L."/>
            <person name="Bansal M."/>
            <person name="Baxter L."/>
            <person name="Beisel K.W."/>
            <person name="Bersano T."/>
            <person name="Bono H."/>
            <person name="Chalk A.M."/>
            <person name="Chiu K.P."/>
            <person name="Choudhary V."/>
            <person name="Christoffels A."/>
            <person name="Clutterbuck D.R."/>
            <person name="Crowe M.L."/>
            <person name="Dalla E."/>
            <person name="Dalrymple B.P."/>
            <person name="de Bono B."/>
            <person name="Della Gatta G."/>
            <person name="di Bernardo D."/>
            <person name="Down T."/>
            <person name="Engstrom P."/>
            <person name="Fagiolini M."/>
            <person name="Faulkner G."/>
            <person name="Fletcher C.F."/>
            <person name="Fukushima T."/>
            <person name="Furuno M."/>
            <person name="Futaki S."/>
            <person name="Gariboldi M."/>
            <person name="Georgii-Hemming P."/>
            <person name="Gingeras T.R."/>
            <person name="Gojobori T."/>
            <person name="Green R.E."/>
            <person name="Gustincich S."/>
            <person name="Harbers M."/>
            <person name="Hayashi Y."/>
            <person name="Hensch T.K."/>
            <person name="Hirokawa N."/>
            <person name="Hill D."/>
            <person name="Huminiecki L."/>
            <person name="Iacono M."/>
            <person name="Ikeo K."/>
            <person name="Iwama A."/>
            <person name="Ishikawa T."/>
            <person name="Jakt M."/>
            <person name="Kanapin A."/>
            <person name="Katoh M."/>
            <person name="Kawasawa Y."/>
            <person name="Kelso J."/>
            <person name="Kitamura H."/>
            <person name="Kitano H."/>
            <person name="Kollias G."/>
            <person name="Krishnan S.P."/>
            <person name="Kruger A."/>
            <person name="Kummerfeld S.K."/>
            <person name="Kurochkin I.V."/>
            <person name="Lareau L.F."/>
            <person name="Lazarevic D."/>
            <person name="Lipovich L."/>
            <person name="Liu J."/>
            <person name="Liuni S."/>
            <person name="McWilliam S."/>
            <person name="Madan Babu M."/>
            <person name="Madera M."/>
            <person name="Marchionni L."/>
            <person name="Matsuda H."/>
            <person name="Matsuzawa S."/>
            <person name="Miki H."/>
            <person name="Mignone F."/>
            <person name="Miyake S."/>
            <person name="Morris K."/>
            <person name="Mottagui-Tabar S."/>
            <person name="Mulder N."/>
            <person name="Nakano N."/>
            <person name="Nakauchi H."/>
            <person name="Ng P."/>
            <person name="Nilsson R."/>
            <person name="Nishiguchi S."/>
            <person name="Nishikawa S."/>
            <person name="Nori F."/>
            <person name="Ohara O."/>
            <person name="Okazaki Y."/>
            <person name="Orlando V."/>
            <person name="Pang K.C."/>
            <person name="Pavan W.J."/>
            <person name="Pavesi G."/>
            <person name="Pesole G."/>
            <person name="Petrovsky N."/>
            <person name="Piazza S."/>
            <person name="Reed J."/>
            <person name="Reid J.F."/>
            <person name="Ring B.Z."/>
            <person name="Ringwald M."/>
            <person name="Rost B."/>
            <person name="Ruan Y."/>
            <person name="Salzberg S.L."/>
            <person name="Sandelin A."/>
            <person name="Schneider C."/>
            <person name="Schoenbach C."/>
            <person name="Sekiguchi K."/>
            <person name="Semple C.A."/>
            <person name="Seno S."/>
            <person name="Sessa L."/>
            <person name="Sheng Y."/>
            <person name="Shibata Y."/>
            <person name="Shimada H."/>
            <person name="Shimada K."/>
            <person name="Silva D."/>
            <person name="Sinclair B."/>
            <person name="Sperling S."/>
            <person name="Stupka E."/>
            <person name="Sugiura K."/>
            <person name="Sultana R."/>
            <person name="Takenaka Y."/>
            <person name="Taki K."/>
            <person name="Tammoja K."/>
            <person name="Tan S.L."/>
            <person name="Tang S."/>
            <person name="Taylor M.S."/>
            <person name="Tegner J."/>
            <person name="Teichmann S.A."/>
            <person name="Ueda H.R."/>
            <person name="van Nimwegen E."/>
            <person name="Verardo R."/>
            <person name="Wei C.L."/>
            <person name="Yagi K."/>
            <person name="Yamanishi H."/>
            <person name="Zabarovsky E."/>
            <person name="Zhu S."/>
            <person name="Zimmer A."/>
            <person name="Hide W."/>
            <person name="Bult C."/>
            <person name="Grimmond S.M."/>
            <person name="Teasdale R.D."/>
            <person name="Liu E.T."/>
            <person name="Brusic V."/>
            <person name="Quackenbush J."/>
            <person name="Wahlestedt C."/>
            <person name="Mattick J.S."/>
            <person name="Hume D.A."/>
            <person name="Kai C."/>
            <person name="Sasaki D."/>
            <person name="Tomaru Y."/>
            <person name="Fukuda S."/>
            <person name="Kanamori-Katayama M."/>
            <person name="Suzuki M."/>
            <person name="Aoki J."/>
            <person name="Arakawa T."/>
            <person name="Iida J."/>
            <person name="Imamura K."/>
            <person name="Itoh M."/>
            <person name="Kato T."/>
            <person name="Kawaji H."/>
            <person name="Kawagashira N."/>
            <person name="Kawashima T."/>
            <person name="Kojima M."/>
            <person name="Kondo S."/>
            <person name="Konno H."/>
            <person name="Nakano K."/>
            <person name="Ninomiya N."/>
            <person name="Nishio T."/>
            <person name="Okada M."/>
            <person name="Plessy C."/>
            <person name="Shibata K."/>
            <person name="Shiraki T."/>
            <person name="Suzuki S."/>
            <person name="Tagami M."/>
            <person name="Waki K."/>
            <person name="Watahiki A."/>
            <person name="Okamura-Oho Y."/>
            <person name="Suzuki H."/>
            <person name="Kawai J."/>
            <person name="Hayashizaki Y."/>
        </authorList>
    </citation>
    <scope>NUCLEOTIDE SEQUENCE [LARGE SCALE MRNA] (ISOFORMS 1 AND 3)</scope>
    <source>
        <strain>C57BL/6J</strain>
        <tissue>Cerebellum</tissue>
        <tissue>Fetal head</tissue>
    </source>
</reference>
<reference key="2">
    <citation type="journal article" date="2004" name="Genome Res.">
        <title>The status, quality, and expansion of the NIH full-length cDNA project: the Mammalian Gene Collection (MGC).</title>
        <authorList>
            <consortium name="The MGC Project Team"/>
        </authorList>
    </citation>
    <scope>NUCLEOTIDE SEQUENCE [LARGE SCALE MRNA] (ISOFORM 2)</scope>
    <source>
        <strain>C57BL/6J</strain>
        <tissue>Head</tissue>
    </source>
</reference>
<protein>
    <recommendedName>
        <fullName>Geminin coiled-coil domain-containing protein 1</fullName>
    </recommendedName>
</protein>
<evidence type="ECO:0000250" key="1"/>
<evidence type="ECO:0000255" key="2"/>
<evidence type="ECO:0000256" key="3">
    <source>
        <dbReference type="SAM" id="MobiDB-lite"/>
    </source>
</evidence>
<evidence type="ECO:0000303" key="4">
    <source>
    </source>
</evidence>
<evidence type="ECO:0000303" key="5">
    <source>
    </source>
</evidence>
<evidence type="ECO:0000305" key="6"/>
<gene>
    <name type="primary">Gmnc</name>
    <name type="synonym">Gemc1</name>
    <name type="synonym">Gm606</name>
</gene>